<protein>
    <recommendedName>
        <fullName evidence="1">Ribulose bisphosphate carboxylase small subunit, chloroplastic 1</fullName>
        <shortName evidence="1">RuBisCO small subunit 1</shortName>
    </recommendedName>
</protein>
<gene>
    <name evidence="1" type="primary">RBCS1</name>
    <name type="synonym">RBCS-1</name>
</gene>
<keyword id="KW-0113">Calvin cycle</keyword>
<keyword id="KW-0120">Carbon dioxide fixation</keyword>
<keyword id="KW-0150">Chloroplast</keyword>
<keyword id="KW-0601">Photorespiration</keyword>
<keyword id="KW-0602">Photosynthesis</keyword>
<keyword id="KW-0934">Plastid</keyword>
<dbReference type="EMBL" id="X51806">
    <property type="protein sequence ID" value="CAA36103.1"/>
    <property type="molecule type" value="mRNA"/>
</dbReference>
<dbReference type="PIR" id="S07118">
    <property type="entry name" value="S07118"/>
</dbReference>
<dbReference type="SMR" id="P16129"/>
<dbReference type="GO" id="GO:0009507">
    <property type="term" value="C:chloroplast"/>
    <property type="evidence" value="ECO:0007669"/>
    <property type="project" value="UniProtKB-SubCell"/>
</dbReference>
<dbReference type="GO" id="GO:0009853">
    <property type="term" value="P:photorespiration"/>
    <property type="evidence" value="ECO:0007669"/>
    <property type="project" value="UniProtKB-KW"/>
</dbReference>
<dbReference type="GO" id="GO:0019253">
    <property type="term" value="P:reductive pentose-phosphate cycle"/>
    <property type="evidence" value="ECO:0007669"/>
    <property type="project" value="UniProtKB-KW"/>
</dbReference>
<dbReference type="CDD" id="cd03527">
    <property type="entry name" value="RuBisCO_small"/>
    <property type="match status" value="1"/>
</dbReference>
<dbReference type="Gene3D" id="3.30.190.10">
    <property type="entry name" value="Ribulose bisphosphate carboxylase, small subunit"/>
    <property type="match status" value="1"/>
</dbReference>
<dbReference type="HAMAP" id="MF_00859">
    <property type="entry name" value="RuBisCO_S_bact"/>
    <property type="match status" value="1"/>
</dbReference>
<dbReference type="InterPro" id="IPR024681">
    <property type="entry name" value="RuBisCO_ssu"/>
</dbReference>
<dbReference type="InterPro" id="IPR000894">
    <property type="entry name" value="RuBisCO_ssu_dom"/>
</dbReference>
<dbReference type="InterPro" id="IPR036385">
    <property type="entry name" value="RuBisCO_ssu_sf"/>
</dbReference>
<dbReference type="PANTHER" id="PTHR31262">
    <property type="entry name" value="RIBULOSE BISPHOSPHATE CARBOXYLASE SMALL CHAIN 1, CHLOROPLASTIC"/>
    <property type="match status" value="1"/>
</dbReference>
<dbReference type="PANTHER" id="PTHR31262:SF0">
    <property type="entry name" value="RIBULOSE BISPHOSPHATE CARBOXYLASE SMALL SUBUNIT, CHLOROPLASTIC 1"/>
    <property type="match status" value="1"/>
</dbReference>
<dbReference type="Pfam" id="PF00101">
    <property type="entry name" value="RuBisCO_small"/>
    <property type="match status" value="1"/>
</dbReference>
<dbReference type="SMART" id="SM00961">
    <property type="entry name" value="RuBisCO_small"/>
    <property type="match status" value="1"/>
</dbReference>
<dbReference type="SUPFAM" id="SSF55239">
    <property type="entry name" value="RuBisCO, small subunit"/>
    <property type="match status" value="1"/>
</dbReference>
<feature type="chain" id="PRO_0000198585" description="Ribulose bisphosphate carboxylase small subunit, chloroplastic 1">
    <location>
        <begin position="1" status="less than"/>
        <end position="126"/>
    </location>
</feature>
<feature type="non-terminal residue">
    <location>
        <position position="1"/>
    </location>
</feature>
<reference key="1">
    <citation type="journal article" date="1989" name="Mol. Gen. Genet.">
        <title>Strong homology between the small subunit of ribulose-1,5-bisphosphate carboxylase/oxygenase of two species of Acetabularia and the occurrence of unusual codon usage.</title>
        <authorList>
            <person name="Schneider S.U."/>
            <person name="Leible M.B."/>
            <person name="Yang X.P."/>
        </authorList>
    </citation>
    <scope>NUCLEOTIDE SEQUENCE [MRNA]</scope>
    <source>
        <strain>17</strain>
    </source>
</reference>
<proteinExistence type="evidence at transcript level"/>
<sequence>FSYLPPLTDEQISKQVDYILANSWTPCLEFAASDQAYAGNDNCIRMGPVASTYQDNRYWTMWKLPMFGCTDGSQVLSEIQACTKAFPDAYIRLVCFDANRQVQISGFLVHRPPSATDYRLPADRQV</sequence>
<evidence type="ECO:0000255" key="1">
    <source>
        <dbReference type="HAMAP-Rule" id="MF_00860"/>
    </source>
</evidence>
<accession>P16129</accession>
<organism>
    <name type="scientific">Acetabularia peniculus</name>
    <name type="common">Green alga</name>
    <name type="synonym">Polyphysa peniculus</name>
    <dbReference type="NCBI Taxonomy" id="35862"/>
    <lineage>
        <taxon>Eukaryota</taxon>
        <taxon>Viridiplantae</taxon>
        <taxon>Chlorophyta</taxon>
        <taxon>Ulvophyceae</taxon>
        <taxon>TCBD clade</taxon>
        <taxon>Dasycladales</taxon>
        <taxon>Polyphysaceae</taxon>
        <taxon>Acetabularia</taxon>
    </lineage>
</organism>
<name>RBS1_ACEPE</name>
<comment type="function">
    <text evidence="1">RuBisCO catalyzes two reactions: the carboxylation of D-ribulose 1,5-bisphosphate, the primary event in carbon dioxide fixation, as well as the oxidative fragmentation of the pentose substrate. Both reactions occur simultaneously and in competition at the same active site. Although the small subunit is not catalytic it is essential for maximal activity.</text>
</comment>
<comment type="subunit">
    <text evidence="1">Heterohexadecamer of 8 large and 8 small subunits.</text>
</comment>
<comment type="subcellular location">
    <subcellularLocation>
        <location evidence="1">Plastid</location>
        <location evidence="1">Chloroplast</location>
    </subcellularLocation>
</comment>
<comment type="miscellaneous">
    <text evidence="1">The basic functional RuBisCO is composed of a large chain homodimer in a 'head-to-tail' conformation. In form I RuBisCO this homodimer is arranged in a barrel-like tetramer with the small subunits forming a tetrameric 'cap' on each end of the 'barrel'.</text>
</comment>
<comment type="similarity">
    <text evidence="1">Belongs to the RuBisCO small chain family.</text>
</comment>